<proteinExistence type="inferred from homology"/>
<sequence>MIISKQLFLLFFLLFFIFPLRHASNPSKCSSSNSRPHRCGPLEVPIRFPFCDHPLFNLLCTNLNNTVLQLPMSGTFFVQYIDYRKQQIYINDPENCLAKRLLTFNISGSPFSPRFDTLYTFLTCPNELVLPSWYPSIPCLSNSTSSFFATSNFALAESMLPSCQIVKRIYVPADSPFAETRFSSYLNQSLLLEWNSPNCRGCEIDYLRCGFKNKASPEVKCFGAKKSGHLSRAVVAVLICLSIIGAVILFVTCIAIRIHNTPRRRHWAVPAAAATVMQQPREVMATRGLDQSTIEKYKTMELGESRRPPGTNGIVCPICLSEYVSKETVRFIPECDHCFHAKCIDVWLKIHGSCPLCRNSRA</sequence>
<evidence type="ECO:0000250" key="1"/>
<evidence type="ECO:0000255" key="2"/>
<evidence type="ECO:0000255" key="3">
    <source>
        <dbReference type="PROSITE-ProRule" id="PRU00175"/>
    </source>
</evidence>
<evidence type="ECO:0000305" key="4"/>
<name>AT21B_ARATH</name>
<accession>P0CH02</accession>
<accession>Q3EBF2</accession>
<keyword id="KW-0472">Membrane</keyword>
<keyword id="KW-0479">Metal-binding</keyword>
<keyword id="KW-1185">Reference proteome</keyword>
<keyword id="KW-0732">Signal</keyword>
<keyword id="KW-0808">Transferase</keyword>
<keyword id="KW-0812">Transmembrane</keyword>
<keyword id="KW-1133">Transmembrane helix</keyword>
<keyword id="KW-0833">Ubl conjugation pathway</keyword>
<keyword id="KW-0862">Zinc</keyword>
<keyword id="KW-0863">Zinc-finger</keyword>
<protein>
    <recommendedName>
        <fullName>Putative RING-H2 finger protein ATL21B</fullName>
        <ecNumber evidence="4">2.3.2.27</ecNumber>
    </recommendedName>
    <alternativeName>
        <fullName evidence="4">RING-type E3 ubiquitin transferase ATL21B</fullName>
    </alternativeName>
</protein>
<gene>
    <name type="primary">ATL21B</name>
    <name type="ordered locus">At2g46494</name>
    <name type="ORF">F11C10</name>
    <name type="ORF">F13A10</name>
</gene>
<dbReference type="EC" id="2.3.2.27" evidence="4"/>
<dbReference type="EMBL" id="AC006418">
    <property type="status" value="NOT_ANNOTATED_CDS"/>
    <property type="molecule type" value="Genomic_DNA"/>
</dbReference>
<dbReference type="EMBL" id="AC006526">
    <property type="status" value="NOT_ANNOTATED_CDS"/>
    <property type="molecule type" value="Genomic_DNA"/>
</dbReference>
<dbReference type="EMBL" id="CP002685">
    <property type="protein sequence ID" value="AEC10706.1"/>
    <property type="molecule type" value="Genomic_DNA"/>
</dbReference>
<dbReference type="RefSeq" id="NP_001189761.1">
    <property type="nucleotide sequence ID" value="NM_001202832.1"/>
</dbReference>
<dbReference type="SMR" id="P0CH02"/>
<dbReference type="iPTMnet" id="P0CH02"/>
<dbReference type="PaxDb" id="3702-AT2G46494.1"/>
<dbReference type="EnsemblPlants" id="AT2G46494.1">
    <property type="protein sequence ID" value="AT2G46494.1"/>
    <property type="gene ID" value="AT2G46494"/>
</dbReference>
<dbReference type="GeneID" id="10723138"/>
<dbReference type="Gramene" id="AT2G46494.1">
    <property type="protein sequence ID" value="AT2G46494.1"/>
    <property type="gene ID" value="AT2G46494"/>
</dbReference>
<dbReference type="KEGG" id="ath:AT2G46494"/>
<dbReference type="Araport" id="AT2G46494"/>
<dbReference type="TAIR" id="AT2G46494">
    <property type="gene designation" value="ATL94"/>
</dbReference>
<dbReference type="eggNOG" id="KOG0800">
    <property type="taxonomic scope" value="Eukaryota"/>
</dbReference>
<dbReference type="HOGENOM" id="CLU_046769_0_0_1"/>
<dbReference type="InParanoid" id="P0CH02"/>
<dbReference type="OMA" id="PAREGYC"/>
<dbReference type="OrthoDB" id="8062037at2759"/>
<dbReference type="UniPathway" id="UPA00143"/>
<dbReference type="PRO" id="PR:P0CH02"/>
<dbReference type="Proteomes" id="UP000006548">
    <property type="component" value="Chromosome 2"/>
</dbReference>
<dbReference type="ExpressionAtlas" id="P0CH02">
    <property type="expression patterns" value="baseline"/>
</dbReference>
<dbReference type="GO" id="GO:0016020">
    <property type="term" value="C:membrane"/>
    <property type="evidence" value="ECO:0007669"/>
    <property type="project" value="UniProtKB-SubCell"/>
</dbReference>
<dbReference type="GO" id="GO:0030247">
    <property type="term" value="F:polysaccharide binding"/>
    <property type="evidence" value="ECO:0007669"/>
    <property type="project" value="InterPro"/>
</dbReference>
<dbReference type="GO" id="GO:0016740">
    <property type="term" value="F:transferase activity"/>
    <property type="evidence" value="ECO:0007669"/>
    <property type="project" value="UniProtKB-KW"/>
</dbReference>
<dbReference type="GO" id="GO:0008270">
    <property type="term" value="F:zinc ion binding"/>
    <property type="evidence" value="ECO:0007669"/>
    <property type="project" value="UniProtKB-KW"/>
</dbReference>
<dbReference type="GO" id="GO:0016567">
    <property type="term" value="P:protein ubiquitination"/>
    <property type="evidence" value="ECO:0007669"/>
    <property type="project" value="UniProtKB-UniPathway"/>
</dbReference>
<dbReference type="CDD" id="cd16461">
    <property type="entry name" value="RING-H2_EL5-like"/>
    <property type="match status" value="1"/>
</dbReference>
<dbReference type="Gene3D" id="3.30.40.10">
    <property type="entry name" value="Zinc/RING finger domain, C3HC4 (zinc finger)"/>
    <property type="match status" value="1"/>
</dbReference>
<dbReference type="InterPro" id="IPR046948">
    <property type="entry name" value="ATL20-22-like"/>
</dbReference>
<dbReference type="InterPro" id="IPR025287">
    <property type="entry name" value="WAK_GUB"/>
</dbReference>
<dbReference type="InterPro" id="IPR001841">
    <property type="entry name" value="Znf_RING"/>
</dbReference>
<dbReference type="InterPro" id="IPR013083">
    <property type="entry name" value="Znf_RING/FYVE/PHD"/>
</dbReference>
<dbReference type="PANTHER" id="PTHR46279:SF14">
    <property type="entry name" value="RING-H2 FINGER PROTEIN ATL20-RELATED"/>
    <property type="match status" value="1"/>
</dbReference>
<dbReference type="PANTHER" id="PTHR46279">
    <property type="entry name" value="RING/U-BOX SUPERFAMILY PROTEIN"/>
    <property type="match status" value="1"/>
</dbReference>
<dbReference type="Pfam" id="PF13947">
    <property type="entry name" value="GUB_WAK_bind"/>
    <property type="match status" value="1"/>
</dbReference>
<dbReference type="Pfam" id="PF13639">
    <property type="entry name" value="zf-RING_2"/>
    <property type="match status" value="1"/>
</dbReference>
<dbReference type="SMART" id="SM00184">
    <property type="entry name" value="RING"/>
    <property type="match status" value="1"/>
</dbReference>
<dbReference type="SUPFAM" id="SSF57850">
    <property type="entry name" value="RING/U-box"/>
    <property type="match status" value="1"/>
</dbReference>
<dbReference type="PROSITE" id="PS50089">
    <property type="entry name" value="ZF_RING_2"/>
    <property type="match status" value="1"/>
</dbReference>
<reference key="1">
    <citation type="journal article" date="1999" name="Nature">
        <title>Sequence and analysis of chromosome 2 of the plant Arabidopsis thaliana.</title>
        <authorList>
            <person name="Lin X."/>
            <person name="Kaul S."/>
            <person name="Rounsley S.D."/>
            <person name="Shea T.P."/>
            <person name="Benito M.-I."/>
            <person name="Town C.D."/>
            <person name="Fujii C.Y."/>
            <person name="Mason T.M."/>
            <person name="Bowman C.L."/>
            <person name="Barnstead M.E."/>
            <person name="Feldblyum T.V."/>
            <person name="Buell C.R."/>
            <person name="Ketchum K.A."/>
            <person name="Lee J.J."/>
            <person name="Ronning C.M."/>
            <person name="Koo H.L."/>
            <person name="Moffat K.S."/>
            <person name="Cronin L.A."/>
            <person name="Shen M."/>
            <person name="Pai G."/>
            <person name="Van Aken S."/>
            <person name="Umayam L."/>
            <person name="Tallon L.J."/>
            <person name="Gill J.E."/>
            <person name="Adams M.D."/>
            <person name="Carrera A.J."/>
            <person name="Creasy T.H."/>
            <person name="Goodman H.M."/>
            <person name="Somerville C.R."/>
            <person name="Copenhaver G.P."/>
            <person name="Preuss D."/>
            <person name="Nierman W.C."/>
            <person name="White O."/>
            <person name="Eisen J.A."/>
            <person name="Salzberg S.L."/>
            <person name="Fraser C.M."/>
            <person name="Venter J.C."/>
        </authorList>
    </citation>
    <scope>NUCLEOTIDE SEQUENCE [LARGE SCALE GENOMIC DNA]</scope>
    <source>
        <strain>cv. Columbia</strain>
    </source>
</reference>
<reference key="2">
    <citation type="journal article" date="2017" name="Plant J.">
        <title>Araport11: a complete reannotation of the Arabidopsis thaliana reference genome.</title>
        <authorList>
            <person name="Cheng C.Y."/>
            <person name="Krishnakumar V."/>
            <person name="Chan A.P."/>
            <person name="Thibaud-Nissen F."/>
            <person name="Schobel S."/>
            <person name="Town C.D."/>
        </authorList>
    </citation>
    <scope>GENOME REANNOTATION</scope>
    <source>
        <strain>cv. Columbia</strain>
    </source>
</reference>
<reference key="3">
    <citation type="journal article" date="2002" name="Genome Biol.">
        <title>Evaluation and classification of RING-finger domains encoded by the Arabidopsis genome.</title>
        <authorList>
            <person name="Kosarev P."/>
            <person name="Mayer K.F.X."/>
            <person name="Hardtke C.S."/>
        </authorList>
    </citation>
    <scope>GENE FAMILY ORGANIZATION</scope>
</reference>
<reference key="4">
    <citation type="journal article" date="2006" name="J. Mol. Evol.">
        <title>The ATL gene family from Arabidopsis thaliana and Oryza sativa comprises a large number of putative ubiquitin ligases of the RING-H2 type.</title>
        <authorList>
            <person name="Serrano M."/>
            <person name="Parra S."/>
            <person name="Alcaraz L.D."/>
            <person name="Guzman P."/>
        </authorList>
    </citation>
    <scope>NOMENCLATURE</scope>
    <scope>GENE FAMILY ORGANIZATION</scope>
</reference>
<organism>
    <name type="scientific">Arabidopsis thaliana</name>
    <name type="common">Mouse-ear cress</name>
    <dbReference type="NCBI Taxonomy" id="3702"/>
    <lineage>
        <taxon>Eukaryota</taxon>
        <taxon>Viridiplantae</taxon>
        <taxon>Streptophyta</taxon>
        <taxon>Embryophyta</taxon>
        <taxon>Tracheophyta</taxon>
        <taxon>Spermatophyta</taxon>
        <taxon>Magnoliopsida</taxon>
        <taxon>eudicotyledons</taxon>
        <taxon>Gunneridae</taxon>
        <taxon>Pentapetalae</taxon>
        <taxon>rosids</taxon>
        <taxon>malvids</taxon>
        <taxon>Brassicales</taxon>
        <taxon>Brassicaceae</taxon>
        <taxon>Camelineae</taxon>
        <taxon>Arabidopsis</taxon>
    </lineage>
</organism>
<feature type="signal peptide" evidence="2">
    <location>
        <begin position="1"/>
        <end position="23"/>
    </location>
</feature>
<feature type="chain" id="PRO_0000396121" description="Putative RING-H2 finger protein ATL21B">
    <location>
        <begin position="24"/>
        <end position="362"/>
    </location>
</feature>
<feature type="transmembrane region" description="Helical" evidence="2">
    <location>
        <begin position="234"/>
        <end position="254"/>
    </location>
</feature>
<feature type="zinc finger region" description="RING-type; atypical" evidence="3">
    <location>
        <begin position="316"/>
        <end position="358"/>
    </location>
</feature>
<comment type="catalytic activity">
    <reaction evidence="4">
        <text>S-ubiquitinyl-[E2 ubiquitin-conjugating enzyme]-L-cysteine + [acceptor protein]-L-lysine = [E2 ubiquitin-conjugating enzyme]-L-cysteine + N(6)-ubiquitinyl-[acceptor protein]-L-lysine.</text>
        <dbReference type="EC" id="2.3.2.27"/>
    </reaction>
</comment>
<comment type="pathway">
    <text>Protein modification; protein ubiquitination.</text>
</comment>
<comment type="subcellular location">
    <subcellularLocation>
        <location evidence="4">Membrane</location>
        <topology evidence="4">Single-pass membrane protein</topology>
    </subcellularLocation>
</comment>
<comment type="domain">
    <text evidence="1">The RING-type zinc finger domain mediates binding to an E2 ubiquitin-conjugating enzyme.</text>
</comment>
<comment type="similarity">
    <text evidence="4">Belongs to the RING-type zinc finger family. ATL subfamily.</text>
</comment>